<organism>
    <name type="scientific">Drosophila melanogaster</name>
    <name type="common">Fruit fly</name>
    <dbReference type="NCBI Taxonomy" id="7227"/>
    <lineage>
        <taxon>Eukaryota</taxon>
        <taxon>Metazoa</taxon>
        <taxon>Ecdysozoa</taxon>
        <taxon>Arthropoda</taxon>
        <taxon>Hexapoda</taxon>
        <taxon>Insecta</taxon>
        <taxon>Pterygota</taxon>
        <taxon>Neoptera</taxon>
        <taxon>Endopterygota</taxon>
        <taxon>Diptera</taxon>
        <taxon>Brachycera</taxon>
        <taxon>Muscomorpha</taxon>
        <taxon>Ephydroidea</taxon>
        <taxon>Drosophilidae</taxon>
        <taxon>Drosophila</taxon>
        <taxon>Sophophora</taxon>
    </lineage>
</organism>
<accession>P10735</accession>
<accession>Q5U1D4</accession>
<accession>Q9NEH6</accession>
<accession>Q9U1J6</accession>
<accession>Q9V3R2</accession>
<reference key="1">
    <citation type="journal article" date="1987" name="Cell">
        <title>The tko locus, site of a behavioral mutation in D. melanogaster, codes for a protein homologous to prokaryotic ribosomal protein S12.</title>
        <authorList>
            <person name="Royden C.S."/>
            <person name="Pirrotta V."/>
            <person name="Jan L.Y."/>
        </authorList>
    </citation>
    <scope>NUCLEOTIDE SEQUENCE [MRNA]</scope>
</reference>
<reference key="2">
    <citation type="journal article" date="2003" name="Mitochondrion">
        <title>Gene dosage and selective expression modify phenotype in a Drosophila model of human mitochondrial disease.</title>
        <authorList>
            <person name="Toivonen J.M."/>
            <person name="Manjiry S."/>
            <person name="Touraille S."/>
            <person name="Alziari S."/>
            <person name="O'Dell K.M.C."/>
            <person name="Jacobs H.T."/>
        </authorList>
    </citation>
    <scope>NUCLEOTIDE SEQUENCE [GENOMIC DNA]</scope>
    <scope>DEVELOPMENTAL STAGE</scope>
    <scope>MUTAGENESIS OF LEU-85</scope>
</reference>
<reference key="3">
    <citation type="journal article" date="2000" name="Science">
        <title>The genome sequence of Drosophila melanogaster.</title>
        <authorList>
            <person name="Adams M.D."/>
            <person name="Celniker S.E."/>
            <person name="Holt R.A."/>
            <person name="Evans C.A."/>
            <person name="Gocayne J.D."/>
            <person name="Amanatides P.G."/>
            <person name="Scherer S.E."/>
            <person name="Li P.W."/>
            <person name="Hoskins R.A."/>
            <person name="Galle R.F."/>
            <person name="George R.A."/>
            <person name="Lewis S.E."/>
            <person name="Richards S."/>
            <person name="Ashburner M."/>
            <person name="Henderson S.N."/>
            <person name="Sutton G.G."/>
            <person name="Wortman J.R."/>
            <person name="Yandell M.D."/>
            <person name="Zhang Q."/>
            <person name="Chen L.X."/>
            <person name="Brandon R.C."/>
            <person name="Rogers Y.-H.C."/>
            <person name="Blazej R.G."/>
            <person name="Champe M."/>
            <person name="Pfeiffer B.D."/>
            <person name="Wan K.H."/>
            <person name="Doyle C."/>
            <person name="Baxter E.G."/>
            <person name="Helt G."/>
            <person name="Nelson C.R."/>
            <person name="Miklos G.L.G."/>
            <person name="Abril J.F."/>
            <person name="Agbayani A."/>
            <person name="An H.-J."/>
            <person name="Andrews-Pfannkoch C."/>
            <person name="Baldwin D."/>
            <person name="Ballew R.M."/>
            <person name="Basu A."/>
            <person name="Baxendale J."/>
            <person name="Bayraktaroglu L."/>
            <person name="Beasley E.M."/>
            <person name="Beeson K.Y."/>
            <person name="Benos P.V."/>
            <person name="Berman B.P."/>
            <person name="Bhandari D."/>
            <person name="Bolshakov S."/>
            <person name="Borkova D."/>
            <person name="Botchan M.R."/>
            <person name="Bouck J."/>
            <person name="Brokstein P."/>
            <person name="Brottier P."/>
            <person name="Burtis K.C."/>
            <person name="Busam D.A."/>
            <person name="Butler H."/>
            <person name="Cadieu E."/>
            <person name="Center A."/>
            <person name="Chandra I."/>
            <person name="Cherry J.M."/>
            <person name="Cawley S."/>
            <person name="Dahlke C."/>
            <person name="Davenport L.B."/>
            <person name="Davies P."/>
            <person name="de Pablos B."/>
            <person name="Delcher A."/>
            <person name="Deng Z."/>
            <person name="Mays A.D."/>
            <person name="Dew I."/>
            <person name="Dietz S.M."/>
            <person name="Dodson K."/>
            <person name="Doup L.E."/>
            <person name="Downes M."/>
            <person name="Dugan-Rocha S."/>
            <person name="Dunkov B.C."/>
            <person name="Dunn P."/>
            <person name="Durbin K.J."/>
            <person name="Evangelista C.C."/>
            <person name="Ferraz C."/>
            <person name="Ferriera S."/>
            <person name="Fleischmann W."/>
            <person name="Fosler C."/>
            <person name="Gabrielian A.E."/>
            <person name="Garg N.S."/>
            <person name="Gelbart W.M."/>
            <person name="Glasser K."/>
            <person name="Glodek A."/>
            <person name="Gong F."/>
            <person name="Gorrell J.H."/>
            <person name="Gu Z."/>
            <person name="Guan P."/>
            <person name="Harris M."/>
            <person name="Harris N.L."/>
            <person name="Harvey D.A."/>
            <person name="Heiman T.J."/>
            <person name="Hernandez J.R."/>
            <person name="Houck J."/>
            <person name="Hostin D."/>
            <person name="Houston K.A."/>
            <person name="Howland T.J."/>
            <person name="Wei M.-H."/>
            <person name="Ibegwam C."/>
            <person name="Jalali M."/>
            <person name="Kalush F."/>
            <person name="Karpen G.H."/>
            <person name="Ke Z."/>
            <person name="Kennison J.A."/>
            <person name="Ketchum K.A."/>
            <person name="Kimmel B.E."/>
            <person name="Kodira C.D."/>
            <person name="Kraft C.L."/>
            <person name="Kravitz S."/>
            <person name="Kulp D."/>
            <person name="Lai Z."/>
            <person name="Lasko P."/>
            <person name="Lei Y."/>
            <person name="Levitsky A.A."/>
            <person name="Li J.H."/>
            <person name="Li Z."/>
            <person name="Liang Y."/>
            <person name="Lin X."/>
            <person name="Liu X."/>
            <person name="Mattei B."/>
            <person name="McIntosh T.C."/>
            <person name="McLeod M.P."/>
            <person name="McPherson D."/>
            <person name="Merkulov G."/>
            <person name="Milshina N.V."/>
            <person name="Mobarry C."/>
            <person name="Morris J."/>
            <person name="Moshrefi A."/>
            <person name="Mount S.M."/>
            <person name="Moy M."/>
            <person name="Murphy B."/>
            <person name="Murphy L."/>
            <person name="Muzny D.M."/>
            <person name="Nelson D.L."/>
            <person name="Nelson D.R."/>
            <person name="Nelson K.A."/>
            <person name="Nixon K."/>
            <person name="Nusskern D.R."/>
            <person name="Pacleb J.M."/>
            <person name="Palazzolo M."/>
            <person name="Pittman G.S."/>
            <person name="Pan S."/>
            <person name="Pollard J."/>
            <person name="Puri V."/>
            <person name="Reese M.G."/>
            <person name="Reinert K."/>
            <person name="Remington K."/>
            <person name="Saunders R.D.C."/>
            <person name="Scheeler F."/>
            <person name="Shen H."/>
            <person name="Shue B.C."/>
            <person name="Siden-Kiamos I."/>
            <person name="Simpson M."/>
            <person name="Skupski M.P."/>
            <person name="Smith T.J."/>
            <person name="Spier E."/>
            <person name="Spradling A.C."/>
            <person name="Stapleton M."/>
            <person name="Strong R."/>
            <person name="Sun E."/>
            <person name="Svirskas R."/>
            <person name="Tector C."/>
            <person name="Turner R."/>
            <person name="Venter E."/>
            <person name="Wang A.H."/>
            <person name="Wang X."/>
            <person name="Wang Z.-Y."/>
            <person name="Wassarman D.A."/>
            <person name="Weinstock G.M."/>
            <person name="Weissenbach J."/>
            <person name="Williams S.M."/>
            <person name="Woodage T."/>
            <person name="Worley K.C."/>
            <person name="Wu D."/>
            <person name="Yang S."/>
            <person name="Yao Q.A."/>
            <person name="Ye J."/>
            <person name="Yeh R.-F."/>
            <person name="Zaveri J.S."/>
            <person name="Zhan M."/>
            <person name="Zhang G."/>
            <person name="Zhao Q."/>
            <person name="Zheng L."/>
            <person name="Zheng X.H."/>
            <person name="Zhong F.N."/>
            <person name="Zhong W."/>
            <person name="Zhou X."/>
            <person name="Zhu S.C."/>
            <person name="Zhu X."/>
            <person name="Smith H.O."/>
            <person name="Gibbs R.A."/>
            <person name="Myers E.W."/>
            <person name="Rubin G.M."/>
            <person name="Venter J.C."/>
        </authorList>
    </citation>
    <scope>NUCLEOTIDE SEQUENCE [LARGE SCALE GENOMIC DNA]</scope>
    <source>
        <strain>Berkeley</strain>
    </source>
</reference>
<reference key="4">
    <citation type="journal article" date="2002" name="Genome Biol.">
        <title>Annotation of the Drosophila melanogaster euchromatic genome: a systematic review.</title>
        <authorList>
            <person name="Misra S."/>
            <person name="Crosby M.A."/>
            <person name="Mungall C.J."/>
            <person name="Matthews B.B."/>
            <person name="Campbell K.S."/>
            <person name="Hradecky P."/>
            <person name="Huang Y."/>
            <person name="Kaminker J.S."/>
            <person name="Millburn G.H."/>
            <person name="Prochnik S.E."/>
            <person name="Smith C.D."/>
            <person name="Tupy J.L."/>
            <person name="Whitfield E.J."/>
            <person name="Bayraktaroglu L."/>
            <person name="Berman B.P."/>
            <person name="Bettencourt B.R."/>
            <person name="Celniker S.E."/>
            <person name="de Grey A.D.N.J."/>
            <person name="Drysdale R.A."/>
            <person name="Harris N.L."/>
            <person name="Richter J."/>
            <person name="Russo S."/>
            <person name="Schroeder A.J."/>
            <person name="Shu S.Q."/>
            <person name="Stapleton M."/>
            <person name="Yamada C."/>
            <person name="Ashburner M."/>
            <person name="Gelbart W.M."/>
            <person name="Rubin G.M."/>
            <person name="Lewis S.E."/>
        </authorList>
    </citation>
    <scope>GENOME REANNOTATION</scope>
    <source>
        <strain>Berkeley</strain>
    </source>
</reference>
<reference key="5">
    <citation type="journal article" date="2000" name="Science">
        <title>From sequence to chromosome: the tip of the X chromosome of D. melanogaster.</title>
        <authorList>
            <person name="Benos P.V."/>
            <person name="Gatt M.K."/>
            <person name="Ashburner M."/>
            <person name="Murphy L."/>
            <person name="Harris D."/>
            <person name="Barrell B.G."/>
            <person name="Ferraz C."/>
            <person name="Vidal S."/>
            <person name="Brun C."/>
            <person name="Demailles J."/>
            <person name="Cadieu E."/>
            <person name="Dreano S."/>
            <person name="Gloux S."/>
            <person name="Lelaure V."/>
            <person name="Mottier S."/>
            <person name="Galibert F."/>
            <person name="Borkova D."/>
            <person name="Minana B."/>
            <person name="Kafatos F.C."/>
            <person name="Louis C."/>
            <person name="Siden-Kiamos I."/>
            <person name="Bolshakov S."/>
            <person name="Papagiannakis G."/>
            <person name="Spanos L."/>
            <person name="Cox S."/>
            <person name="Madueno E."/>
            <person name="de Pablos B."/>
            <person name="Modolell J."/>
            <person name="Peter A."/>
            <person name="Schoettler P."/>
            <person name="Werner M."/>
            <person name="Mourkioti F."/>
            <person name="Beinert N."/>
            <person name="Dowe G."/>
            <person name="Schaefer U."/>
            <person name="Jaeckle H."/>
            <person name="Bucheton A."/>
            <person name="Callister D.M."/>
            <person name="Campbell L.A."/>
            <person name="Darlamitsou A."/>
            <person name="Henderson N.S."/>
            <person name="McMillan P.J."/>
            <person name="Salles C."/>
            <person name="Tait E.A."/>
            <person name="Valenti P."/>
            <person name="Saunders R.D.C."/>
            <person name="Glover D.M."/>
        </authorList>
    </citation>
    <scope>NUCLEOTIDE SEQUENCE [LARGE SCALE GENOMIC DNA]</scope>
    <source>
        <strain>Oregon-R</strain>
    </source>
</reference>
<reference key="6">
    <citation type="submission" date="2004-10" db="EMBL/GenBank/DDBJ databases">
        <authorList>
            <person name="Stapleton M."/>
            <person name="Carlson J.W."/>
            <person name="Chavez C."/>
            <person name="Frise E."/>
            <person name="George R.A."/>
            <person name="Pacleb J.M."/>
            <person name="Park S."/>
            <person name="Wan K.H."/>
            <person name="Yu C."/>
            <person name="Rubin G.M."/>
            <person name="Celniker S.E."/>
        </authorList>
    </citation>
    <scope>NUCLEOTIDE SEQUENCE [LARGE SCALE MRNA]</scope>
    <source>
        <strain>Berkeley</strain>
        <tissue>Head</tissue>
    </source>
</reference>
<keyword id="KW-0496">Mitochondrion</keyword>
<keyword id="KW-1185">Reference proteome</keyword>
<keyword id="KW-0687">Ribonucleoprotein</keyword>
<keyword id="KW-0689">Ribosomal protein</keyword>
<keyword id="KW-0809">Transit peptide</keyword>
<sequence>MNFLRQSFGITKQLASQAIQCSYETAVRGMASLQQMHRSGPHIKTRPPRQPLDGKPFAKGVVLKTLIKKPKKPNSANRKCVLVRLSTGKEMVAYIPGIGHNLQEHNIVLCRVGRLQDVPGVKLKAVRGVYDLAHVVKKSQ</sequence>
<dbReference type="EMBL" id="M19494">
    <property type="protein sequence ID" value="AAA28935.1"/>
    <property type="molecule type" value="mRNA"/>
</dbReference>
<dbReference type="EMBL" id="AJ250320">
    <property type="protein sequence ID" value="CAB65721.1"/>
    <property type="molecule type" value="Genomic_DNA"/>
</dbReference>
<dbReference type="EMBL" id="AE014298">
    <property type="protein sequence ID" value="AAF45781.1"/>
    <property type="molecule type" value="Genomic_DNA"/>
</dbReference>
<dbReference type="EMBL" id="AL133505">
    <property type="protein sequence ID" value="CAB63528.1"/>
    <property type="status" value="ALT_SEQ"/>
    <property type="molecule type" value="Genomic_DNA"/>
</dbReference>
<dbReference type="EMBL" id="AL133505">
    <property type="protein sequence ID" value="CAB65841.1"/>
    <property type="molecule type" value="Genomic_DNA"/>
</dbReference>
<dbReference type="EMBL" id="BT015958">
    <property type="protein sequence ID" value="AAV36843.1"/>
    <property type="molecule type" value="mRNA"/>
</dbReference>
<dbReference type="PIR" id="A29622">
    <property type="entry name" value="A29622"/>
</dbReference>
<dbReference type="RefSeq" id="NP_001245490.1">
    <property type="nucleotide sequence ID" value="NM_001258561.1"/>
</dbReference>
<dbReference type="RefSeq" id="NP_525050.1">
    <property type="nucleotide sequence ID" value="NM_080311.3"/>
</dbReference>
<dbReference type="SMR" id="P10735"/>
<dbReference type="BioGRID" id="57764">
    <property type="interactions" value="4"/>
</dbReference>
<dbReference type="DIP" id="DIP-22123N"/>
<dbReference type="FunCoup" id="P10735">
    <property type="interactions" value="618"/>
</dbReference>
<dbReference type="IntAct" id="P10735">
    <property type="interactions" value="1"/>
</dbReference>
<dbReference type="STRING" id="7227.FBpp0300988"/>
<dbReference type="PaxDb" id="7227-FBpp0300988"/>
<dbReference type="DNASU" id="31228"/>
<dbReference type="EnsemblMetazoa" id="FBtr0070459">
    <property type="protein sequence ID" value="FBpp0070443"/>
    <property type="gene ID" value="FBgn0003714"/>
</dbReference>
<dbReference type="GeneID" id="31228"/>
<dbReference type="KEGG" id="dme:Dmel_CG7925"/>
<dbReference type="AGR" id="FB:FBgn0003714"/>
<dbReference type="CTD" id="31228"/>
<dbReference type="FlyBase" id="FBgn0003714">
    <property type="gene designation" value="tko"/>
</dbReference>
<dbReference type="VEuPathDB" id="VectorBase:FBgn0003714"/>
<dbReference type="eggNOG" id="KOG1750">
    <property type="taxonomic scope" value="Eukaryota"/>
</dbReference>
<dbReference type="GeneTree" id="ENSGT00550000075103"/>
<dbReference type="HOGENOM" id="CLU_104295_3_1_1"/>
<dbReference type="InParanoid" id="P10735"/>
<dbReference type="OMA" id="MHRQGPP"/>
<dbReference type="OrthoDB" id="361013at2759"/>
<dbReference type="PhylomeDB" id="P10735"/>
<dbReference type="Reactome" id="R-DME-5389840">
    <property type="pathway name" value="Mitochondrial translation elongation"/>
</dbReference>
<dbReference type="Reactome" id="R-DME-5419276">
    <property type="pathway name" value="Mitochondrial translation termination"/>
</dbReference>
<dbReference type="BioGRID-ORCS" id="31228">
    <property type="hits" value="0 hits in 1 CRISPR screen"/>
</dbReference>
<dbReference type="GenomeRNAi" id="31228"/>
<dbReference type="PRO" id="PR:P10735"/>
<dbReference type="Proteomes" id="UP000000803">
    <property type="component" value="Chromosome X"/>
</dbReference>
<dbReference type="Bgee" id="FBgn0003714">
    <property type="expression patterns" value="Expressed in secondary oocyte and 179 other cell types or tissues"/>
</dbReference>
<dbReference type="ExpressionAtlas" id="P10735">
    <property type="expression patterns" value="baseline and differential"/>
</dbReference>
<dbReference type="GO" id="GO:0005763">
    <property type="term" value="C:mitochondrial small ribosomal subunit"/>
    <property type="evidence" value="ECO:0000250"/>
    <property type="project" value="UniProtKB"/>
</dbReference>
<dbReference type="GO" id="GO:0005840">
    <property type="term" value="C:ribosome"/>
    <property type="evidence" value="ECO:0000318"/>
    <property type="project" value="GO_Central"/>
</dbReference>
<dbReference type="GO" id="GO:0003735">
    <property type="term" value="F:structural constituent of ribosome"/>
    <property type="evidence" value="ECO:0000250"/>
    <property type="project" value="UniProtKB"/>
</dbReference>
<dbReference type="GO" id="GO:0007619">
    <property type="term" value="P:courtship behavior"/>
    <property type="evidence" value="ECO:0000304"/>
    <property type="project" value="FlyBase"/>
</dbReference>
<dbReference type="GO" id="GO:0008049">
    <property type="term" value="P:male courtship behavior"/>
    <property type="evidence" value="ECO:0000315"/>
    <property type="project" value="FlyBase"/>
</dbReference>
<dbReference type="GO" id="GO:0007638">
    <property type="term" value="P:mechanosensory behavior"/>
    <property type="evidence" value="ECO:0000315"/>
    <property type="project" value="FlyBase"/>
</dbReference>
<dbReference type="GO" id="GO:0032543">
    <property type="term" value="P:mitochondrial translation"/>
    <property type="evidence" value="ECO:0000250"/>
    <property type="project" value="UniProtKB"/>
</dbReference>
<dbReference type="GO" id="GO:0001666">
    <property type="term" value="P:response to hypoxia"/>
    <property type="evidence" value="ECO:0000314"/>
    <property type="project" value="FlyBase"/>
</dbReference>
<dbReference type="GO" id="GO:0009612">
    <property type="term" value="P:response to mechanical stimulus"/>
    <property type="evidence" value="ECO:0000315"/>
    <property type="project" value="FlyBase"/>
</dbReference>
<dbReference type="GO" id="GO:0007605">
    <property type="term" value="P:sensory perception of sound"/>
    <property type="evidence" value="ECO:0000315"/>
    <property type="project" value="FlyBase"/>
</dbReference>
<dbReference type="GO" id="GO:0006412">
    <property type="term" value="P:translation"/>
    <property type="evidence" value="ECO:0000318"/>
    <property type="project" value="GO_Central"/>
</dbReference>
<dbReference type="CDD" id="cd03368">
    <property type="entry name" value="Ribosomal_S12"/>
    <property type="match status" value="1"/>
</dbReference>
<dbReference type="FunFam" id="2.40.50.140:FF:000115">
    <property type="entry name" value="28S ribosomal protein S12, mitochondrial"/>
    <property type="match status" value="1"/>
</dbReference>
<dbReference type="Gene3D" id="2.40.50.140">
    <property type="entry name" value="Nucleic acid-binding proteins"/>
    <property type="match status" value="1"/>
</dbReference>
<dbReference type="InterPro" id="IPR012340">
    <property type="entry name" value="NA-bd_OB-fold"/>
</dbReference>
<dbReference type="InterPro" id="IPR006032">
    <property type="entry name" value="Ribosomal_uS12"/>
</dbReference>
<dbReference type="InterPro" id="IPR005679">
    <property type="entry name" value="Ribosomal_uS12_bac"/>
</dbReference>
<dbReference type="NCBIfam" id="TIGR00981">
    <property type="entry name" value="rpsL_bact"/>
    <property type="match status" value="1"/>
</dbReference>
<dbReference type="PANTHER" id="PTHR11652">
    <property type="entry name" value="30S RIBOSOMAL PROTEIN S12 FAMILY MEMBER"/>
    <property type="match status" value="1"/>
</dbReference>
<dbReference type="Pfam" id="PF00164">
    <property type="entry name" value="Ribosom_S12_S23"/>
    <property type="match status" value="1"/>
</dbReference>
<dbReference type="PRINTS" id="PR01034">
    <property type="entry name" value="RIBOSOMALS12"/>
</dbReference>
<dbReference type="SUPFAM" id="SSF50249">
    <property type="entry name" value="Nucleic acid-binding proteins"/>
    <property type="match status" value="1"/>
</dbReference>
<dbReference type="PROSITE" id="PS00055">
    <property type="entry name" value="RIBOSOMAL_S12"/>
    <property type="match status" value="1"/>
</dbReference>
<comment type="subcellular location">
    <subcellularLocation>
        <location>Mitochondrion</location>
    </subcellularLocation>
</comment>
<comment type="developmental stage">
    <text evidence="2">Abundantly expressed through all stages of the life cycle.</text>
</comment>
<comment type="miscellaneous">
    <text>Mutation of tko causes a behavioral mutation ('bang sensitivity' = temporarily paralysis in response to a physical jolt).</text>
</comment>
<comment type="similarity">
    <text evidence="3">Belongs to the universal ribosomal protein uS12 family.</text>
</comment>
<comment type="sequence caution" evidence="3">
    <conflict type="erroneous gene model prediction">
        <sequence resource="EMBL-CDS" id="CAB63528"/>
    </conflict>
</comment>
<feature type="transit peptide" description="Mitochondrion" evidence="1">
    <location>
        <begin position="1"/>
        <end position="30"/>
    </location>
</feature>
<feature type="chain" id="PRO_0000030605" description="Small ribosomal subunit protein uS12m">
    <location>
        <begin position="31"/>
        <end position="140"/>
    </location>
</feature>
<feature type="mutagenesis site" description="In allele tko-25t." evidence="2">
    <original>L</original>
    <variation>H</variation>
    <location>
        <position position="85"/>
    </location>
</feature>
<name>RT12_DROME</name>
<gene>
    <name type="primary">tko</name>
    <name type="ORF">CG7925</name>
</gene>
<protein>
    <recommendedName>
        <fullName evidence="3">Small ribosomal subunit protein uS12m</fullName>
    </recommendedName>
    <alternativeName>
        <fullName>40S ribosomal protein S12, mitochondrial</fullName>
        <shortName>MRP-S12</shortName>
        <shortName>S12mt</shortName>
    </alternativeName>
    <alternativeName>
        <fullName>MT-RPS12</fullName>
    </alternativeName>
    <alternativeName>
        <fullName>Protein technical knockout locus</fullName>
    </alternativeName>
</protein>
<proteinExistence type="evidence at protein level"/>
<evidence type="ECO:0000255" key="1"/>
<evidence type="ECO:0000269" key="2">
    <source>
    </source>
</evidence>
<evidence type="ECO:0000305" key="3"/>